<proteinExistence type="evidence at transcript level"/>
<accession>Q9GMY3</accession>
<name>PEPC_RHIFE</name>
<evidence type="ECO:0000250" key="1"/>
<evidence type="ECO:0000255" key="2"/>
<evidence type="ECO:0000255" key="3">
    <source>
        <dbReference type="PROSITE-ProRule" id="PRU01103"/>
    </source>
</evidence>
<evidence type="ECO:0000255" key="4">
    <source>
        <dbReference type="PROSITE-ProRule" id="PRU10094"/>
    </source>
</evidence>
<evidence type="ECO:0000305" key="5"/>
<gene>
    <name type="primary">PGC</name>
    <name type="synonym">PGNC</name>
</gene>
<protein>
    <recommendedName>
        <fullName>Gastricsin</fullName>
        <ecNumber>3.4.23.3</ecNumber>
    </recommendedName>
    <alternativeName>
        <fullName>Pepsinogen C</fullName>
    </alternativeName>
</protein>
<keyword id="KW-0064">Aspartyl protease</keyword>
<keyword id="KW-0222">Digestion</keyword>
<keyword id="KW-1015">Disulfide bond</keyword>
<keyword id="KW-0378">Hydrolase</keyword>
<keyword id="KW-0645">Protease</keyword>
<keyword id="KW-1185">Reference proteome</keyword>
<keyword id="KW-0964">Secreted</keyword>
<keyword id="KW-0732">Signal</keyword>
<keyword id="KW-0865">Zymogen</keyword>
<dbReference type="EC" id="3.4.23.3"/>
<dbReference type="EMBL" id="AB047249">
    <property type="protein sequence ID" value="BAB11755.1"/>
    <property type="molecule type" value="mRNA"/>
</dbReference>
<dbReference type="RefSeq" id="XP_032958813.1">
    <property type="nucleotide sequence ID" value="XM_033102922.1"/>
</dbReference>
<dbReference type="SMR" id="Q9GMY3"/>
<dbReference type="FunCoup" id="Q9GMY3">
    <property type="interactions" value="26"/>
</dbReference>
<dbReference type="MEROPS" id="A01.003"/>
<dbReference type="Ensembl" id="ENSRFET00010003109.1">
    <property type="protein sequence ID" value="ENSRFEP00010002827.1"/>
    <property type="gene ID" value="ENSRFEG00010002003.1"/>
</dbReference>
<dbReference type="GeneID" id="117020439"/>
<dbReference type="GeneTree" id="ENSGT00940000160626"/>
<dbReference type="InParanoid" id="Q9GMY3"/>
<dbReference type="OrthoDB" id="771136at2759"/>
<dbReference type="Proteomes" id="UP000472240">
    <property type="component" value="Chromosome 3"/>
</dbReference>
<dbReference type="GO" id="GO:0005615">
    <property type="term" value="C:extracellular space"/>
    <property type="evidence" value="ECO:0007669"/>
    <property type="project" value="TreeGrafter"/>
</dbReference>
<dbReference type="GO" id="GO:0004190">
    <property type="term" value="F:aspartic-type endopeptidase activity"/>
    <property type="evidence" value="ECO:0007669"/>
    <property type="project" value="UniProtKB-KW"/>
</dbReference>
<dbReference type="GO" id="GO:0007586">
    <property type="term" value="P:digestion"/>
    <property type="evidence" value="ECO:0007669"/>
    <property type="project" value="UniProtKB-KW"/>
</dbReference>
<dbReference type="GO" id="GO:0006508">
    <property type="term" value="P:proteolysis"/>
    <property type="evidence" value="ECO:0007669"/>
    <property type="project" value="UniProtKB-KW"/>
</dbReference>
<dbReference type="CDD" id="cd05477">
    <property type="entry name" value="gastricsin"/>
    <property type="match status" value="1"/>
</dbReference>
<dbReference type="FunFam" id="2.40.70.10:FF:000006">
    <property type="entry name" value="Cathepsin E"/>
    <property type="match status" value="1"/>
</dbReference>
<dbReference type="FunFam" id="2.40.70.10:FF:000004">
    <property type="entry name" value="Pepsin A"/>
    <property type="match status" value="1"/>
</dbReference>
<dbReference type="Gene3D" id="6.10.140.60">
    <property type="match status" value="1"/>
</dbReference>
<dbReference type="Gene3D" id="2.40.70.10">
    <property type="entry name" value="Acid Proteases"/>
    <property type="match status" value="2"/>
</dbReference>
<dbReference type="InterPro" id="IPR001461">
    <property type="entry name" value="Aspartic_peptidase_A1"/>
</dbReference>
<dbReference type="InterPro" id="IPR001969">
    <property type="entry name" value="Aspartic_peptidase_AS"/>
</dbReference>
<dbReference type="InterPro" id="IPR012848">
    <property type="entry name" value="Aspartic_peptidase_N"/>
</dbReference>
<dbReference type="InterPro" id="IPR033121">
    <property type="entry name" value="PEPTIDASE_A1"/>
</dbReference>
<dbReference type="InterPro" id="IPR021109">
    <property type="entry name" value="Peptidase_aspartic_dom_sf"/>
</dbReference>
<dbReference type="PANTHER" id="PTHR47966">
    <property type="entry name" value="BETA-SITE APP-CLEAVING ENZYME, ISOFORM A-RELATED"/>
    <property type="match status" value="1"/>
</dbReference>
<dbReference type="PANTHER" id="PTHR47966:SF72">
    <property type="entry name" value="GASTRICSIN"/>
    <property type="match status" value="1"/>
</dbReference>
<dbReference type="Pfam" id="PF07966">
    <property type="entry name" value="A1_Propeptide"/>
    <property type="match status" value="1"/>
</dbReference>
<dbReference type="Pfam" id="PF00026">
    <property type="entry name" value="Asp"/>
    <property type="match status" value="1"/>
</dbReference>
<dbReference type="PRINTS" id="PR00792">
    <property type="entry name" value="PEPSIN"/>
</dbReference>
<dbReference type="SUPFAM" id="SSF50630">
    <property type="entry name" value="Acid proteases"/>
    <property type="match status" value="1"/>
</dbReference>
<dbReference type="PROSITE" id="PS00141">
    <property type="entry name" value="ASP_PROTEASE"/>
    <property type="match status" value="2"/>
</dbReference>
<dbReference type="PROSITE" id="PS51767">
    <property type="entry name" value="PEPTIDASE_A1"/>
    <property type="match status" value="1"/>
</dbReference>
<reference key="1">
    <citation type="journal article" date="2001" name="Mol. Phylogenet. Evol.">
        <title>Phylogenetic position of Eulipotyphla inferred from the cDNA sequences of pepsinogens A and C.</title>
        <authorList>
            <person name="Narita Y."/>
            <person name="Oda S."/>
            <person name="Takenaka O."/>
            <person name="Kageyama T."/>
        </authorList>
    </citation>
    <scope>NUCLEOTIDE SEQUENCE [MRNA]</scope>
</reference>
<feature type="signal peptide" evidence="2">
    <location>
        <begin position="1"/>
        <end position="16"/>
    </location>
</feature>
<feature type="propeptide" id="PRO_0000026071" description="Activation peptide" evidence="1">
    <location>
        <begin position="17"/>
        <end position="59"/>
    </location>
</feature>
<feature type="chain" id="PRO_0000026072" description="Gastricsin">
    <location>
        <begin position="60"/>
        <end position="389"/>
    </location>
</feature>
<feature type="domain" description="Peptidase A1" evidence="3">
    <location>
        <begin position="73"/>
        <end position="386"/>
    </location>
</feature>
<feature type="active site" evidence="4">
    <location>
        <position position="91"/>
    </location>
</feature>
<feature type="active site" evidence="4">
    <location>
        <position position="277"/>
    </location>
</feature>
<feature type="disulfide bond" evidence="1">
    <location>
        <begin position="104"/>
        <end position="109"/>
    </location>
</feature>
<feature type="disulfide bond" evidence="1">
    <location>
        <begin position="268"/>
        <end position="272"/>
    </location>
</feature>
<feature type="disulfide bond" evidence="1">
    <location>
        <begin position="311"/>
        <end position="344"/>
    </location>
</feature>
<organism>
    <name type="scientific">Rhinolophus ferrumequinum</name>
    <name type="common">Greater horseshoe bat</name>
    <dbReference type="NCBI Taxonomy" id="59479"/>
    <lineage>
        <taxon>Eukaryota</taxon>
        <taxon>Metazoa</taxon>
        <taxon>Chordata</taxon>
        <taxon>Craniata</taxon>
        <taxon>Vertebrata</taxon>
        <taxon>Euteleostomi</taxon>
        <taxon>Mammalia</taxon>
        <taxon>Eutheria</taxon>
        <taxon>Laurasiatheria</taxon>
        <taxon>Chiroptera</taxon>
        <taxon>Yinpterochiroptera</taxon>
        <taxon>Rhinolophoidea</taxon>
        <taxon>Rhinolophidae</taxon>
        <taxon>Rhinolophinae</taxon>
        <taxon>Rhinolophus</taxon>
    </lineage>
</organism>
<comment type="function">
    <text>Hydrolyzes a variety of proteins.</text>
</comment>
<comment type="catalytic activity">
    <reaction>
        <text>More restricted specificity than pepsin A, but shows preferential cleavage at Tyr-|-Xaa bonds. High activity on hemoglobin.</text>
        <dbReference type="EC" id="3.4.23.3"/>
    </reaction>
</comment>
<comment type="subcellular location">
    <subcellularLocation>
        <location>Secreted</location>
    </subcellularLocation>
</comment>
<comment type="similarity">
    <text evidence="5">Belongs to the peptidase A1 family.</text>
</comment>
<sequence>MKWMVVVLLCLQLLEAKVVKVPLKKLKSLRETMKEKGLLEEFLKNHKYDPAQKYRYTDFSVAYEPMAYMDAAYFGEISIGTPPQNFLVLFDTGSSNLWVPSVYCQTQACTGHTRFNPSQSSTYSTNGQTFSLQYGSGSLTGFFGYDTLTVQSIQVPNQEFGLSENEPGTNFVYAQFDGIMGMAYPSLAMGGATTALQGMLQEGALTSPVFSFYLSNQQGSQNGGAVIFGGVDNSLYQGQIYWAPVTQELYWQIGIEEFLIGGQASGWCSQGCQAIVDTGTSLLTVPQQYMSALLQATGAQEDQYGQFFVNCNYIQNLPTFTFIINGVQFPLPPSSYILNNNGYCTVGVEPTYLPSQNGQPLWILGDVFLRSYYSVYDMGNNRVGFATAA</sequence>